<feature type="chain" id="PRO_1000147291" description="Nucleotide-binding protein Cla_1551">
    <location>
        <begin position="1"/>
        <end position="163"/>
    </location>
</feature>
<proteinExistence type="inferred from homology"/>
<keyword id="KW-0547">Nucleotide-binding</keyword>
<keyword id="KW-1185">Reference proteome</keyword>
<organism>
    <name type="scientific">Campylobacter lari (strain RM2100 / D67 / ATCC BAA-1060)</name>
    <dbReference type="NCBI Taxonomy" id="306263"/>
    <lineage>
        <taxon>Bacteria</taxon>
        <taxon>Pseudomonadati</taxon>
        <taxon>Campylobacterota</taxon>
        <taxon>Epsilonproteobacteria</taxon>
        <taxon>Campylobacterales</taxon>
        <taxon>Campylobacteraceae</taxon>
        <taxon>Campylobacter</taxon>
    </lineage>
</organism>
<name>Y1551_CAMLR</name>
<evidence type="ECO:0000255" key="1">
    <source>
        <dbReference type="HAMAP-Rule" id="MF_00632"/>
    </source>
</evidence>
<gene>
    <name type="ordered locus">Cla_1551</name>
</gene>
<sequence length="163" mass="18341">MASEHSFDISGEIDKQELKNALEQAKKELDSRYDLKGIKSEIELNEKESVYKLICSSEAKLEVLKDIVISKLIKRGINPAGIKELNRESGANFRLNLKVNDAIDTDSAKKINKAIKDSKLKVTSSIRGNEIRVVGKQIDDLQSVMKIVKELNLELNLSFKNLK</sequence>
<reference key="1">
    <citation type="journal article" date="2008" name="Foodborne Pathog. Dis.">
        <title>The complete genome sequence and analysis of the human pathogen Campylobacter lari.</title>
        <authorList>
            <person name="Miller W.G."/>
            <person name="Wang G."/>
            <person name="Binnewies T.T."/>
            <person name="Parker C.T."/>
        </authorList>
    </citation>
    <scope>NUCLEOTIDE SEQUENCE [LARGE SCALE GENOMIC DNA]</scope>
    <source>
        <strain>RM2100 / D67 / ATCC BAA-1060</strain>
    </source>
</reference>
<dbReference type="EMBL" id="CP000932">
    <property type="protein sequence ID" value="ACM64850.1"/>
    <property type="molecule type" value="Genomic_DNA"/>
</dbReference>
<dbReference type="RefSeq" id="WP_012662233.1">
    <property type="nucleotide sequence ID" value="NC_012039.1"/>
</dbReference>
<dbReference type="RefSeq" id="WP_012662234.1">
    <property type="nucleotide sequence ID" value="NC_012039.1"/>
</dbReference>
<dbReference type="SMR" id="B9KE62"/>
<dbReference type="STRING" id="306263.Cla_1551"/>
<dbReference type="KEGG" id="cla:CLA_1551"/>
<dbReference type="PATRIC" id="fig|306263.5.peg.1529"/>
<dbReference type="eggNOG" id="COG1666">
    <property type="taxonomic scope" value="Bacteria"/>
</dbReference>
<dbReference type="HOGENOM" id="CLU_099839_1_0_7"/>
<dbReference type="Proteomes" id="UP000007727">
    <property type="component" value="Chromosome"/>
</dbReference>
<dbReference type="GO" id="GO:0005829">
    <property type="term" value="C:cytosol"/>
    <property type="evidence" value="ECO:0007669"/>
    <property type="project" value="TreeGrafter"/>
</dbReference>
<dbReference type="GO" id="GO:0000166">
    <property type="term" value="F:nucleotide binding"/>
    <property type="evidence" value="ECO:0007669"/>
    <property type="project" value="TreeGrafter"/>
</dbReference>
<dbReference type="CDD" id="cd11740">
    <property type="entry name" value="YajQ_like"/>
    <property type="match status" value="1"/>
</dbReference>
<dbReference type="Gene3D" id="3.30.70.860">
    <property type="match status" value="1"/>
</dbReference>
<dbReference type="Gene3D" id="3.30.70.990">
    <property type="entry name" value="YajQ-like, domain 2"/>
    <property type="match status" value="1"/>
</dbReference>
<dbReference type="HAMAP" id="MF_00632">
    <property type="entry name" value="YajQ"/>
    <property type="match status" value="1"/>
</dbReference>
<dbReference type="InterPro" id="IPR007551">
    <property type="entry name" value="DUF520"/>
</dbReference>
<dbReference type="InterPro" id="IPR035571">
    <property type="entry name" value="UPF0234-like_C"/>
</dbReference>
<dbReference type="InterPro" id="IPR035570">
    <property type="entry name" value="UPF0234_N"/>
</dbReference>
<dbReference type="InterPro" id="IPR036183">
    <property type="entry name" value="YajQ-like_sf"/>
</dbReference>
<dbReference type="NCBIfam" id="NF003819">
    <property type="entry name" value="PRK05412.1"/>
    <property type="match status" value="1"/>
</dbReference>
<dbReference type="PANTHER" id="PTHR30476">
    <property type="entry name" value="UPF0234 PROTEIN YAJQ"/>
    <property type="match status" value="1"/>
</dbReference>
<dbReference type="PANTHER" id="PTHR30476:SF0">
    <property type="entry name" value="UPF0234 PROTEIN YAJQ"/>
    <property type="match status" value="1"/>
</dbReference>
<dbReference type="Pfam" id="PF04461">
    <property type="entry name" value="DUF520"/>
    <property type="match status" value="1"/>
</dbReference>
<dbReference type="SUPFAM" id="SSF89963">
    <property type="entry name" value="YajQ-like"/>
    <property type="match status" value="2"/>
</dbReference>
<comment type="function">
    <text evidence="1">Nucleotide-binding protein.</text>
</comment>
<comment type="similarity">
    <text evidence="1">Belongs to the YajQ family.</text>
</comment>
<protein>
    <recommendedName>
        <fullName evidence="1">Nucleotide-binding protein Cla_1551</fullName>
    </recommendedName>
</protein>
<accession>B9KE62</accession>